<sequence length="280" mass="31263">MNKQQLFENIKKKQSFLCVGLDTDIKKIPQHLLSEEDPIFAFNKAIIDATADYCVAYKPNLAFYESLGTKGMMAFEKTVAYLRENYPDQFIIADAKRGDIGNTSEMYARSFFDHIKVDAVTVAPYMGEDSVKPFLIYPEAWVILLALTSNKGSHDFQMTEDANGERLFEKVLKKSQEWANDEQMMYVVGATQGKMFLDIRKQAPNHFLLVPGVGAQGGSLAEVAQYGMNDQCGLLVNSSRAIIYADKTEAFANVAREAAHAVQKEMAGYLHDKGIIPCKA</sequence>
<name>PYRF_PARD8</name>
<proteinExistence type="inferred from homology"/>
<protein>
    <recommendedName>
        <fullName evidence="1">Orotidine 5'-phosphate decarboxylase</fullName>
        <ecNumber evidence="1">4.1.1.23</ecNumber>
    </recommendedName>
    <alternativeName>
        <fullName evidence="1">OMP decarboxylase</fullName>
        <shortName evidence="1">OMPDCase</shortName>
        <shortName evidence="1">OMPdecase</shortName>
    </alternativeName>
</protein>
<dbReference type="EC" id="4.1.1.23" evidence="1"/>
<dbReference type="EMBL" id="CP000140">
    <property type="protein sequence ID" value="ABR43834.1"/>
    <property type="molecule type" value="Genomic_DNA"/>
</dbReference>
<dbReference type="RefSeq" id="WP_005854382.1">
    <property type="nucleotide sequence ID" value="NC_009615.1"/>
</dbReference>
<dbReference type="SMR" id="A6LDS0"/>
<dbReference type="STRING" id="435591.BDI_2103"/>
<dbReference type="PaxDb" id="435591-BDI_2103"/>
<dbReference type="KEGG" id="pdi:BDI_2103"/>
<dbReference type="eggNOG" id="COG0284">
    <property type="taxonomic scope" value="Bacteria"/>
</dbReference>
<dbReference type="HOGENOM" id="CLU_060704_1_0_10"/>
<dbReference type="BioCyc" id="PDIS435591:G1G5A-2158-MONOMER"/>
<dbReference type="UniPathway" id="UPA00070">
    <property type="reaction ID" value="UER00120"/>
</dbReference>
<dbReference type="Proteomes" id="UP000000566">
    <property type="component" value="Chromosome"/>
</dbReference>
<dbReference type="GO" id="GO:0004590">
    <property type="term" value="F:orotidine-5'-phosphate decarboxylase activity"/>
    <property type="evidence" value="ECO:0007669"/>
    <property type="project" value="UniProtKB-UniRule"/>
</dbReference>
<dbReference type="GO" id="GO:0006207">
    <property type="term" value="P:'de novo' pyrimidine nucleobase biosynthetic process"/>
    <property type="evidence" value="ECO:0007669"/>
    <property type="project" value="InterPro"/>
</dbReference>
<dbReference type="GO" id="GO:0044205">
    <property type="term" value="P:'de novo' UMP biosynthetic process"/>
    <property type="evidence" value="ECO:0007669"/>
    <property type="project" value="UniProtKB-UniRule"/>
</dbReference>
<dbReference type="CDD" id="cd04725">
    <property type="entry name" value="OMP_decarboxylase_like"/>
    <property type="match status" value="1"/>
</dbReference>
<dbReference type="FunFam" id="3.20.20.70:FF:000157">
    <property type="entry name" value="Orotidine 5'-phosphate decarboxylase"/>
    <property type="match status" value="1"/>
</dbReference>
<dbReference type="Gene3D" id="3.20.20.70">
    <property type="entry name" value="Aldolase class I"/>
    <property type="match status" value="1"/>
</dbReference>
<dbReference type="HAMAP" id="MF_01215">
    <property type="entry name" value="OMPdecase_type2"/>
    <property type="match status" value="1"/>
</dbReference>
<dbReference type="InterPro" id="IPR013785">
    <property type="entry name" value="Aldolase_TIM"/>
</dbReference>
<dbReference type="InterPro" id="IPR011995">
    <property type="entry name" value="OMPdecase_type-2"/>
</dbReference>
<dbReference type="InterPro" id="IPR001754">
    <property type="entry name" value="OMPdeCOase_dom"/>
</dbReference>
<dbReference type="InterPro" id="IPR011060">
    <property type="entry name" value="RibuloseP-bd_barrel"/>
</dbReference>
<dbReference type="NCBIfam" id="TIGR02127">
    <property type="entry name" value="pyrF_sub2"/>
    <property type="match status" value="1"/>
</dbReference>
<dbReference type="PANTHER" id="PTHR43375">
    <property type="entry name" value="OROTIDINE 5'-PHOSPHATE DECARBOXYLASE"/>
    <property type="match status" value="1"/>
</dbReference>
<dbReference type="PANTHER" id="PTHR43375:SF1">
    <property type="entry name" value="OROTIDINE 5'-PHOSPHATE DECARBOXYLASE"/>
    <property type="match status" value="1"/>
</dbReference>
<dbReference type="Pfam" id="PF00215">
    <property type="entry name" value="OMPdecase"/>
    <property type="match status" value="1"/>
</dbReference>
<dbReference type="SMART" id="SM00934">
    <property type="entry name" value="OMPdecase"/>
    <property type="match status" value="1"/>
</dbReference>
<dbReference type="SUPFAM" id="SSF51366">
    <property type="entry name" value="Ribulose-phoshate binding barrel"/>
    <property type="match status" value="1"/>
</dbReference>
<gene>
    <name evidence="1" type="primary">pyrF</name>
    <name type="ordered locus">BDI_2103</name>
</gene>
<organism>
    <name type="scientific">Parabacteroides distasonis (strain ATCC 8503 / DSM 20701 / CIP 104284 / JCM 5825 / NCTC 11152)</name>
    <dbReference type="NCBI Taxonomy" id="435591"/>
    <lineage>
        <taxon>Bacteria</taxon>
        <taxon>Pseudomonadati</taxon>
        <taxon>Bacteroidota</taxon>
        <taxon>Bacteroidia</taxon>
        <taxon>Bacteroidales</taxon>
        <taxon>Tannerellaceae</taxon>
        <taxon>Parabacteroides</taxon>
    </lineage>
</organism>
<accession>A6LDS0</accession>
<evidence type="ECO:0000255" key="1">
    <source>
        <dbReference type="HAMAP-Rule" id="MF_01215"/>
    </source>
</evidence>
<keyword id="KW-0210">Decarboxylase</keyword>
<keyword id="KW-0456">Lyase</keyword>
<keyword id="KW-0665">Pyrimidine biosynthesis</keyword>
<keyword id="KW-1185">Reference proteome</keyword>
<reference key="1">
    <citation type="journal article" date="2007" name="PLoS Biol.">
        <title>Evolution of symbiotic bacteria in the distal human intestine.</title>
        <authorList>
            <person name="Xu J."/>
            <person name="Mahowald M.A."/>
            <person name="Ley R.E."/>
            <person name="Lozupone C.A."/>
            <person name="Hamady M."/>
            <person name="Martens E.C."/>
            <person name="Henrissat B."/>
            <person name="Coutinho P.M."/>
            <person name="Minx P."/>
            <person name="Latreille P."/>
            <person name="Cordum H."/>
            <person name="Van Brunt A."/>
            <person name="Kim K."/>
            <person name="Fulton R.S."/>
            <person name="Fulton L.A."/>
            <person name="Clifton S.W."/>
            <person name="Wilson R.K."/>
            <person name="Knight R.D."/>
            <person name="Gordon J.I."/>
        </authorList>
    </citation>
    <scope>NUCLEOTIDE SEQUENCE [LARGE SCALE GENOMIC DNA]</scope>
    <source>
        <strain>ATCC 8503 / DSM 20701 / CIP 104284 / JCM 5825 / NCTC 11152</strain>
    </source>
</reference>
<feature type="chain" id="PRO_1000138957" description="Orotidine 5'-phosphate decarboxylase">
    <location>
        <begin position="1"/>
        <end position="280"/>
    </location>
</feature>
<feature type="active site" description="Proton donor" evidence="1">
    <location>
        <position position="96"/>
    </location>
</feature>
<comment type="catalytic activity">
    <reaction evidence="1">
        <text>orotidine 5'-phosphate + H(+) = UMP + CO2</text>
        <dbReference type="Rhea" id="RHEA:11596"/>
        <dbReference type="ChEBI" id="CHEBI:15378"/>
        <dbReference type="ChEBI" id="CHEBI:16526"/>
        <dbReference type="ChEBI" id="CHEBI:57538"/>
        <dbReference type="ChEBI" id="CHEBI:57865"/>
        <dbReference type="EC" id="4.1.1.23"/>
    </reaction>
</comment>
<comment type="pathway">
    <text evidence="1">Pyrimidine metabolism; UMP biosynthesis via de novo pathway; UMP from orotate: step 2/2.</text>
</comment>
<comment type="similarity">
    <text evidence="1">Belongs to the OMP decarboxylase family. Type 2 subfamily.</text>
</comment>